<organism>
    <name type="scientific">Geobacillus kaustophilus (strain HTA426)</name>
    <dbReference type="NCBI Taxonomy" id="235909"/>
    <lineage>
        <taxon>Bacteria</taxon>
        <taxon>Bacillati</taxon>
        <taxon>Bacillota</taxon>
        <taxon>Bacilli</taxon>
        <taxon>Bacillales</taxon>
        <taxon>Anoxybacillaceae</taxon>
        <taxon>Geobacillus</taxon>
        <taxon>Geobacillus thermoleovorans group</taxon>
    </lineage>
</organism>
<sequence length="253" mass="27241">MRKRIIAGNWKMHKTLAEAVQFVENVKGHVPPADEVDSVVCAPFLFLDRLVQAADGTDLKIGAQTMHFADQGAYTGEVSPVMLKDLGVTYVILGHSERRQMFAETDETVNKKVLAAFTRGLIPIICCGESLEEREAGQTNAVVASQVEKALAGLTPEQVKQAVIAYEPIWAIGTGKSSTPEDANSVCGHIRSVVSRLFGPEAAEAIRIQYGGSVKPDNIRDFLAQEQIDGALVGGASLEPASFLQLVEAGRHE</sequence>
<accession>Q5KVE5</accession>
<evidence type="ECO:0000255" key="1">
    <source>
        <dbReference type="HAMAP-Rule" id="MF_00147"/>
    </source>
</evidence>
<reference key="1">
    <citation type="journal article" date="2004" name="Nucleic Acids Res.">
        <title>Thermoadaptation trait revealed by the genome sequence of thermophilic Geobacillus kaustophilus.</title>
        <authorList>
            <person name="Takami H."/>
            <person name="Takaki Y."/>
            <person name="Chee G.-J."/>
            <person name="Nishi S."/>
            <person name="Shimamura S."/>
            <person name="Suzuki H."/>
            <person name="Matsui S."/>
            <person name="Uchiyama I."/>
        </authorList>
    </citation>
    <scope>NUCLEOTIDE SEQUENCE [LARGE SCALE GENOMIC DNA]</scope>
    <source>
        <strain>HTA426</strain>
    </source>
</reference>
<feature type="chain" id="PRO_0000307470" description="Triosephosphate isomerase">
    <location>
        <begin position="1"/>
        <end position="253"/>
    </location>
</feature>
<feature type="active site" description="Electrophile" evidence="1">
    <location>
        <position position="95"/>
    </location>
</feature>
<feature type="active site" description="Proton acceptor" evidence="1">
    <location>
        <position position="167"/>
    </location>
</feature>
<feature type="binding site" evidence="1">
    <location>
        <begin position="9"/>
        <end position="11"/>
    </location>
    <ligand>
        <name>substrate</name>
    </ligand>
</feature>
<feature type="binding site" evidence="1">
    <location>
        <position position="173"/>
    </location>
    <ligand>
        <name>substrate</name>
    </ligand>
</feature>
<feature type="binding site" evidence="1">
    <location>
        <position position="213"/>
    </location>
    <ligand>
        <name>substrate</name>
    </ligand>
</feature>
<feature type="binding site" evidence="1">
    <location>
        <begin position="234"/>
        <end position="235"/>
    </location>
    <ligand>
        <name>substrate</name>
    </ligand>
</feature>
<feature type="modified residue" description="Phosphoserine" evidence="1">
    <location>
        <position position="213"/>
    </location>
</feature>
<proteinExistence type="inferred from homology"/>
<name>TPIS_GEOKA</name>
<keyword id="KW-0963">Cytoplasm</keyword>
<keyword id="KW-0312">Gluconeogenesis</keyword>
<keyword id="KW-0324">Glycolysis</keyword>
<keyword id="KW-0413">Isomerase</keyword>
<keyword id="KW-0597">Phosphoprotein</keyword>
<keyword id="KW-1185">Reference proteome</keyword>
<gene>
    <name evidence="1" type="primary">tpiA</name>
    <name type="ordered locus">GK3056</name>
</gene>
<dbReference type="EC" id="5.3.1.1" evidence="1"/>
<dbReference type="EMBL" id="BA000043">
    <property type="protein sequence ID" value="BAD77341.1"/>
    <property type="molecule type" value="Genomic_DNA"/>
</dbReference>
<dbReference type="RefSeq" id="WP_011232526.1">
    <property type="nucleotide sequence ID" value="NC_006510.1"/>
</dbReference>
<dbReference type="SMR" id="Q5KVE5"/>
<dbReference type="STRING" id="235909.GK3056"/>
<dbReference type="GeneID" id="32064928"/>
<dbReference type="KEGG" id="gka:GK3056"/>
<dbReference type="eggNOG" id="COG0149">
    <property type="taxonomic scope" value="Bacteria"/>
</dbReference>
<dbReference type="HOGENOM" id="CLU_024251_2_3_9"/>
<dbReference type="UniPathway" id="UPA00109">
    <property type="reaction ID" value="UER00189"/>
</dbReference>
<dbReference type="UniPathway" id="UPA00138"/>
<dbReference type="Proteomes" id="UP000001172">
    <property type="component" value="Chromosome"/>
</dbReference>
<dbReference type="GO" id="GO:0005829">
    <property type="term" value="C:cytosol"/>
    <property type="evidence" value="ECO:0007669"/>
    <property type="project" value="TreeGrafter"/>
</dbReference>
<dbReference type="GO" id="GO:0004807">
    <property type="term" value="F:triose-phosphate isomerase activity"/>
    <property type="evidence" value="ECO:0007669"/>
    <property type="project" value="UniProtKB-UniRule"/>
</dbReference>
<dbReference type="GO" id="GO:0006094">
    <property type="term" value="P:gluconeogenesis"/>
    <property type="evidence" value="ECO:0007669"/>
    <property type="project" value="UniProtKB-UniRule"/>
</dbReference>
<dbReference type="GO" id="GO:0046166">
    <property type="term" value="P:glyceraldehyde-3-phosphate biosynthetic process"/>
    <property type="evidence" value="ECO:0007669"/>
    <property type="project" value="TreeGrafter"/>
</dbReference>
<dbReference type="GO" id="GO:0019563">
    <property type="term" value="P:glycerol catabolic process"/>
    <property type="evidence" value="ECO:0007669"/>
    <property type="project" value="TreeGrafter"/>
</dbReference>
<dbReference type="GO" id="GO:0006096">
    <property type="term" value="P:glycolytic process"/>
    <property type="evidence" value="ECO:0007669"/>
    <property type="project" value="UniProtKB-UniRule"/>
</dbReference>
<dbReference type="CDD" id="cd00311">
    <property type="entry name" value="TIM"/>
    <property type="match status" value="1"/>
</dbReference>
<dbReference type="FunFam" id="3.20.20.70:FF:000016">
    <property type="entry name" value="Triosephosphate isomerase"/>
    <property type="match status" value="1"/>
</dbReference>
<dbReference type="Gene3D" id="3.20.20.70">
    <property type="entry name" value="Aldolase class I"/>
    <property type="match status" value="1"/>
</dbReference>
<dbReference type="HAMAP" id="MF_00147_B">
    <property type="entry name" value="TIM_B"/>
    <property type="match status" value="1"/>
</dbReference>
<dbReference type="InterPro" id="IPR013785">
    <property type="entry name" value="Aldolase_TIM"/>
</dbReference>
<dbReference type="InterPro" id="IPR035990">
    <property type="entry name" value="TIM_sf"/>
</dbReference>
<dbReference type="InterPro" id="IPR022896">
    <property type="entry name" value="TrioseP_Isoase_bac/euk"/>
</dbReference>
<dbReference type="InterPro" id="IPR000652">
    <property type="entry name" value="Triosephosphate_isomerase"/>
</dbReference>
<dbReference type="InterPro" id="IPR020861">
    <property type="entry name" value="Triosephosphate_isomerase_AS"/>
</dbReference>
<dbReference type="NCBIfam" id="TIGR00419">
    <property type="entry name" value="tim"/>
    <property type="match status" value="1"/>
</dbReference>
<dbReference type="PANTHER" id="PTHR21139">
    <property type="entry name" value="TRIOSEPHOSPHATE ISOMERASE"/>
    <property type="match status" value="1"/>
</dbReference>
<dbReference type="PANTHER" id="PTHR21139:SF42">
    <property type="entry name" value="TRIOSEPHOSPHATE ISOMERASE"/>
    <property type="match status" value="1"/>
</dbReference>
<dbReference type="Pfam" id="PF00121">
    <property type="entry name" value="TIM"/>
    <property type="match status" value="1"/>
</dbReference>
<dbReference type="SUPFAM" id="SSF51351">
    <property type="entry name" value="Triosephosphate isomerase (TIM)"/>
    <property type="match status" value="1"/>
</dbReference>
<dbReference type="PROSITE" id="PS00171">
    <property type="entry name" value="TIM_1"/>
    <property type="match status" value="1"/>
</dbReference>
<dbReference type="PROSITE" id="PS51440">
    <property type="entry name" value="TIM_2"/>
    <property type="match status" value="1"/>
</dbReference>
<protein>
    <recommendedName>
        <fullName evidence="1">Triosephosphate isomerase</fullName>
        <shortName evidence="1">TIM</shortName>
        <shortName evidence="1">TPI</shortName>
        <ecNumber evidence="1">5.3.1.1</ecNumber>
    </recommendedName>
    <alternativeName>
        <fullName evidence="1">Triose-phosphate isomerase</fullName>
    </alternativeName>
</protein>
<comment type="function">
    <text evidence="1">Involved in the gluconeogenesis. Catalyzes stereospecifically the conversion of dihydroxyacetone phosphate (DHAP) to D-glyceraldehyde-3-phosphate (G3P).</text>
</comment>
<comment type="catalytic activity">
    <reaction evidence="1">
        <text>D-glyceraldehyde 3-phosphate = dihydroxyacetone phosphate</text>
        <dbReference type="Rhea" id="RHEA:18585"/>
        <dbReference type="ChEBI" id="CHEBI:57642"/>
        <dbReference type="ChEBI" id="CHEBI:59776"/>
        <dbReference type="EC" id="5.3.1.1"/>
    </reaction>
</comment>
<comment type="pathway">
    <text evidence="1">Carbohydrate biosynthesis; gluconeogenesis.</text>
</comment>
<comment type="pathway">
    <text evidence="1">Carbohydrate degradation; glycolysis; D-glyceraldehyde 3-phosphate from glycerone phosphate: step 1/1.</text>
</comment>
<comment type="subunit">
    <text evidence="1">Homodimer.</text>
</comment>
<comment type="subcellular location">
    <subcellularLocation>
        <location evidence="1">Cytoplasm</location>
    </subcellularLocation>
</comment>
<comment type="similarity">
    <text evidence="1">Belongs to the triosephosphate isomerase family.</text>
</comment>